<gene>
    <name evidence="1" type="primary">recA</name>
    <name type="ordered locus">NE1932</name>
</gene>
<name>RECA_NITEU</name>
<reference key="1">
    <citation type="journal article" date="2003" name="J. Bacteriol.">
        <title>Complete genome sequence of the ammonia-oxidizing bacterium and obligate chemolithoautotroph Nitrosomonas europaea.</title>
        <authorList>
            <person name="Chain P."/>
            <person name="Lamerdin J.E."/>
            <person name="Larimer F.W."/>
            <person name="Regala W."/>
            <person name="Lao V."/>
            <person name="Land M.L."/>
            <person name="Hauser L."/>
            <person name="Hooper A.B."/>
            <person name="Klotz M.G."/>
            <person name="Norton J."/>
            <person name="Sayavedra-Soto L.A."/>
            <person name="Arciero D.M."/>
            <person name="Hommes N.G."/>
            <person name="Whittaker M.M."/>
            <person name="Arp D.J."/>
        </authorList>
    </citation>
    <scope>NUCLEOTIDE SEQUENCE [LARGE SCALE GENOMIC DNA]</scope>
    <source>
        <strain>ATCC 19718 / CIP 103999 / KCTC 2705 / NBRC 14298</strain>
    </source>
</reference>
<feature type="chain" id="PRO_0000122785" description="Protein RecA">
    <location>
        <begin position="1"/>
        <end position="343"/>
    </location>
</feature>
<feature type="binding site" evidence="1">
    <location>
        <begin position="66"/>
        <end position="73"/>
    </location>
    <ligand>
        <name>ATP</name>
        <dbReference type="ChEBI" id="CHEBI:30616"/>
    </ligand>
</feature>
<accession>Q82TF6</accession>
<protein>
    <recommendedName>
        <fullName evidence="1">Protein RecA</fullName>
    </recommendedName>
    <alternativeName>
        <fullName evidence="1">Recombinase A</fullName>
    </alternativeName>
</protein>
<organism>
    <name type="scientific">Nitrosomonas europaea (strain ATCC 19718 / CIP 103999 / KCTC 2705 / NBRC 14298)</name>
    <dbReference type="NCBI Taxonomy" id="228410"/>
    <lineage>
        <taxon>Bacteria</taxon>
        <taxon>Pseudomonadati</taxon>
        <taxon>Pseudomonadota</taxon>
        <taxon>Betaproteobacteria</taxon>
        <taxon>Nitrosomonadales</taxon>
        <taxon>Nitrosomonadaceae</taxon>
        <taxon>Nitrosomonas</taxon>
    </lineage>
</organism>
<evidence type="ECO:0000255" key="1">
    <source>
        <dbReference type="HAMAP-Rule" id="MF_00268"/>
    </source>
</evidence>
<keyword id="KW-0067">ATP-binding</keyword>
<keyword id="KW-0963">Cytoplasm</keyword>
<keyword id="KW-0227">DNA damage</keyword>
<keyword id="KW-0233">DNA recombination</keyword>
<keyword id="KW-0234">DNA repair</keyword>
<keyword id="KW-0238">DNA-binding</keyword>
<keyword id="KW-0547">Nucleotide-binding</keyword>
<keyword id="KW-1185">Reference proteome</keyword>
<keyword id="KW-0742">SOS response</keyword>
<proteinExistence type="inferred from homology"/>
<comment type="function">
    <text evidence="1">Can catalyze the hydrolysis of ATP in the presence of single-stranded DNA, the ATP-dependent uptake of single-stranded DNA by duplex DNA, and the ATP-dependent hybridization of homologous single-stranded DNAs. It interacts with LexA causing its activation and leading to its autocatalytic cleavage.</text>
</comment>
<comment type="subcellular location">
    <subcellularLocation>
        <location evidence="1">Cytoplasm</location>
    </subcellularLocation>
</comment>
<comment type="similarity">
    <text evidence="1">Belongs to the RecA family.</text>
</comment>
<sequence length="343" mass="37173">MDENKNKALSAALAQIEKQYGKGSIMRLGDSDVAKDIQVVSTGSLGLDIALGVGGLPRGRIIEIYGPESSGKTTLTLQAIAEMQKLGGTAAFIDAEHALDPQYAQKIGVNVQELLISQPDNGEQALEITDMLVRSGSVDVVVVDSVAALTPRAEIEGEMGEPQMGLQARLMSQALRKLTANIKRTNTMVIFINQIRMKIGVIFGNPETTTGGNALKFYASVRLDIRRTGSIKRGEEMVGNETRVKIVKNKVAPPFKQADFDILYGEGISRESEIIELGVLHKLIEKAGAWYSYNGEKIGQGKDNVRDYLKEHKSIAHEIEQKIRAAVGLAETDSRVVPPSSGE</sequence>
<dbReference type="EMBL" id="AL954747">
    <property type="protein sequence ID" value="CAD85843.1"/>
    <property type="molecule type" value="Genomic_DNA"/>
</dbReference>
<dbReference type="RefSeq" id="WP_011112468.1">
    <property type="nucleotide sequence ID" value="NC_004757.1"/>
</dbReference>
<dbReference type="SMR" id="Q82TF6"/>
<dbReference type="STRING" id="228410.NE1932"/>
<dbReference type="GeneID" id="87105091"/>
<dbReference type="KEGG" id="neu:NE1932"/>
<dbReference type="eggNOG" id="COG0468">
    <property type="taxonomic scope" value="Bacteria"/>
</dbReference>
<dbReference type="HOGENOM" id="CLU_040469_3_2_4"/>
<dbReference type="OrthoDB" id="9776733at2"/>
<dbReference type="PhylomeDB" id="Q82TF6"/>
<dbReference type="Proteomes" id="UP000001416">
    <property type="component" value="Chromosome"/>
</dbReference>
<dbReference type="GO" id="GO:0005829">
    <property type="term" value="C:cytosol"/>
    <property type="evidence" value="ECO:0007669"/>
    <property type="project" value="TreeGrafter"/>
</dbReference>
<dbReference type="GO" id="GO:0005524">
    <property type="term" value="F:ATP binding"/>
    <property type="evidence" value="ECO:0007669"/>
    <property type="project" value="UniProtKB-UniRule"/>
</dbReference>
<dbReference type="GO" id="GO:0016887">
    <property type="term" value="F:ATP hydrolysis activity"/>
    <property type="evidence" value="ECO:0007669"/>
    <property type="project" value="InterPro"/>
</dbReference>
<dbReference type="GO" id="GO:0140664">
    <property type="term" value="F:ATP-dependent DNA damage sensor activity"/>
    <property type="evidence" value="ECO:0007669"/>
    <property type="project" value="InterPro"/>
</dbReference>
<dbReference type="GO" id="GO:0003684">
    <property type="term" value="F:damaged DNA binding"/>
    <property type="evidence" value="ECO:0007669"/>
    <property type="project" value="UniProtKB-UniRule"/>
</dbReference>
<dbReference type="GO" id="GO:0003697">
    <property type="term" value="F:single-stranded DNA binding"/>
    <property type="evidence" value="ECO:0007669"/>
    <property type="project" value="UniProtKB-UniRule"/>
</dbReference>
<dbReference type="GO" id="GO:0006310">
    <property type="term" value="P:DNA recombination"/>
    <property type="evidence" value="ECO:0007669"/>
    <property type="project" value="UniProtKB-UniRule"/>
</dbReference>
<dbReference type="GO" id="GO:0006281">
    <property type="term" value="P:DNA repair"/>
    <property type="evidence" value="ECO:0007669"/>
    <property type="project" value="UniProtKB-UniRule"/>
</dbReference>
<dbReference type="GO" id="GO:0009432">
    <property type="term" value="P:SOS response"/>
    <property type="evidence" value="ECO:0007669"/>
    <property type="project" value="UniProtKB-UniRule"/>
</dbReference>
<dbReference type="CDD" id="cd00983">
    <property type="entry name" value="RecA"/>
    <property type="match status" value="1"/>
</dbReference>
<dbReference type="FunFam" id="3.40.50.300:FF:000087">
    <property type="entry name" value="Recombinase RecA"/>
    <property type="match status" value="1"/>
</dbReference>
<dbReference type="Gene3D" id="3.40.50.300">
    <property type="entry name" value="P-loop containing nucleotide triphosphate hydrolases"/>
    <property type="match status" value="1"/>
</dbReference>
<dbReference type="HAMAP" id="MF_00268">
    <property type="entry name" value="RecA"/>
    <property type="match status" value="1"/>
</dbReference>
<dbReference type="InterPro" id="IPR003593">
    <property type="entry name" value="AAA+_ATPase"/>
</dbReference>
<dbReference type="InterPro" id="IPR013765">
    <property type="entry name" value="DNA_recomb/repair_RecA"/>
</dbReference>
<dbReference type="InterPro" id="IPR020584">
    <property type="entry name" value="DNA_recomb/repair_RecA_CS"/>
</dbReference>
<dbReference type="InterPro" id="IPR027417">
    <property type="entry name" value="P-loop_NTPase"/>
</dbReference>
<dbReference type="InterPro" id="IPR049261">
    <property type="entry name" value="RecA-like_C"/>
</dbReference>
<dbReference type="InterPro" id="IPR049428">
    <property type="entry name" value="RecA-like_N"/>
</dbReference>
<dbReference type="InterPro" id="IPR020588">
    <property type="entry name" value="RecA_ATP-bd"/>
</dbReference>
<dbReference type="InterPro" id="IPR023400">
    <property type="entry name" value="RecA_C_sf"/>
</dbReference>
<dbReference type="InterPro" id="IPR020587">
    <property type="entry name" value="RecA_monomer-monomer_interface"/>
</dbReference>
<dbReference type="NCBIfam" id="TIGR02012">
    <property type="entry name" value="tigrfam_recA"/>
    <property type="match status" value="1"/>
</dbReference>
<dbReference type="PANTHER" id="PTHR45900:SF1">
    <property type="entry name" value="MITOCHONDRIAL DNA REPAIR PROTEIN RECA HOMOLOG-RELATED"/>
    <property type="match status" value="1"/>
</dbReference>
<dbReference type="PANTHER" id="PTHR45900">
    <property type="entry name" value="RECA"/>
    <property type="match status" value="1"/>
</dbReference>
<dbReference type="Pfam" id="PF00154">
    <property type="entry name" value="RecA"/>
    <property type="match status" value="1"/>
</dbReference>
<dbReference type="Pfam" id="PF21096">
    <property type="entry name" value="RecA_C"/>
    <property type="match status" value="1"/>
</dbReference>
<dbReference type="PRINTS" id="PR00142">
    <property type="entry name" value="RECA"/>
</dbReference>
<dbReference type="SMART" id="SM00382">
    <property type="entry name" value="AAA"/>
    <property type="match status" value="1"/>
</dbReference>
<dbReference type="SUPFAM" id="SSF52540">
    <property type="entry name" value="P-loop containing nucleoside triphosphate hydrolases"/>
    <property type="match status" value="1"/>
</dbReference>
<dbReference type="SUPFAM" id="SSF54752">
    <property type="entry name" value="RecA protein, C-terminal domain"/>
    <property type="match status" value="1"/>
</dbReference>
<dbReference type="PROSITE" id="PS00321">
    <property type="entry name" value="RECA_1"/>
    <property type="match status" value="1"/>
</dbReference>
<dbReference type="PROSITE" id="PS50162">
    <property type="entry name" value="RECA_2"/>
    <property type="match status" value="1"/>
</dbReference>
<dbReference type="PROSITE" id="PS50163">
    <property type="entry name" value="RECA_3"/>
    <property type="match status" value="1"/>
</dbReference>